<evidence type="ECO:0000250" key="1"/>
<evidence type="ECO:0000250" key="2">
    <source>
        <dbReference type="UniProtKB" id="Q8NEX9"/>
    </source>
</evidence>
<evidence type="ECO:0000255" key="3">
    <source>
        <dbReference type="PROSITE-ProRule" id="PRU10001"/>
    </source>
</evidence>
<evidence type="ECO:0000305" key="4"/>
<sequence>MAAISDLSFMYRWFKNCNLVRNLSDKYVFITGCDSGFGNLLARQLVDRGMRVLAACFTKEGAQKLQQDTSYQLQTILLDVTKTESIKAATQWVRDQVGEQGLWALVNNAGVGLPSGPNEWLTKEDFVKVINVNLVGLIEVTLHMLPMVKKARGRVVNMSSSGGRVAVIGGGYCISKFGVEAFSDSIRRELHYFGVKVSIIEPGNFRTAILGKDGLEKHMRKLWERLPPETRESYGEEYFRIYTDNLKSTMQLADPRISEVTNSMEHAIVSRSPRIRYNPGLDAKLLYLPLAKFPTPVTDFILSRYLPRPADSV</sequence>
<accession>A4IFM3</accession>
<proteinExistence type="evidence at transcript level"/>
<name>DR9C7_BOVIN</name>
<dbReference type="EC" id="1.1.1.-"/>
<dbReference type="EMBL" id="BC134658">
    <property type="protein sequence ID" value="AAI34659.1"/>
    <property type="molecule type" value="mRNA"/>
</dbReference>
<dbReference type="RefSeq" id="NP_001077206.1">
    <property type="nucleotide sequence ID" value="NM_001083737.1"/>
</dbReference>
<dbReference type="SMR" id="A4IFM3"/>
<dbReference type="FunCoup" id="A4IFM3">
    <property type="interactions" value="25"/>
</dbReference>
<dbReference type="STRING" id="9913.ENSBTAP00000017885"/>
<dbReference type="PaxDb" id="9913-ENSBTAP00000017885"/>
<dbReference type="Ensembl" id="ENSBTAT00000017885.4">
    <property type="protein sequence ID" value="ENSBTAP00000017885.3"/>
    <property type="gene ID" value="ENSBTAG00000013443.5"/>
</dbReference>
<dbReference type="GeneID" id="538876"/>
<dbReference type="KEGG" id="bta:538876"/>
<dbReference type="CTD" id="121214"/>
<dbReference type="VEuPathDB" id="HostDB:ENSBTAG00000013443"/>
<dbReference type="VGNC" id="VGNC:34398">
    <property type="gene designation" value="SDR9C7"/>
</dbReference>
<dbReference type="eggNOG" id="KOG1610">
    <property type="taxonomic scope" value="Eukaryota"/>
</dbReference>
<dbReference type="GeneTree" id="ENSGT00940000161764"/>
<dbReference type="HOGENOM" id="CLU_010194_2_0_1"/>
<dbReference type="InParanoid" id="A4IFM3"/>
<dbReference type="OMA" id="GFMYRWF"/>
<dbReference type="OrthoDB" id="5296at2759"/>
<dbReference type="TreeFam" id="TF325617"/>
<dbReference type="Reactome" id="R-BTA-2453902">
    <property type="pathway name" value="The canonical retinoid cycle in rods (twilight vision)"/>
</dbReference>
<dbReference type="Proteomes" id="UP000009136">
    <property type="component" value="Chromosome 5"/>
</dbReference>
<dbReference type="Bgee" id="ENSBTAG00000013443">
    <property type="expression patterns" value="Expressed in zone of skin and 13 other cell types or tissues"/>
</dbReference>
<dbReference type="GO" id="GO:0005737">
    <property type="term" value="C:cytoplasm"/>
    <property type="evidence" value="ECO:0007669"/>
    <property type="project" value="UniProtKB-SubCell"/>
</dbReference>
<dbReference type="GO" id="GO:0043231">
    <property type="term" value="C:intracellular membrane-bounded organelle"/>
    <property type="evidence" value="ECO:0000318"/>
    <property type="project" value="GO_Central"/>
</dbReference>
<dbReference type="GO" id="GO:0004745">
    <property type="term" value="F:all-trans-retinol dehydrogenase (NAD+) activity"/>
    <property type="evidence" value="ECO:0000318"/>
    <property type="project" value="GO_Central"/>
</dbReference>
<dbReference type="GO" id="GO:0042572">
    <property type="term" value="P:retinol metabolic process"/>
    <property type="evidence" value="ECO:0000318"/>
    <property type="project" value="GO_Central"/>
</dbReference>
<dbReference type="GO" id="GO:0008202">
    <property type="term" value="P:steroid metabolic process"/>
    <property type="evidence" value="ECO:0000318"/>
    <property type="project" value="GO_Central"/>
</dbReference>
<dbReference type="CDD" id="cd09805">
    <property type="entry name" value="type2_17beta_HSD-like_SDR_c"/>
    <property type="match status" value="1"/>
</dbReference>
<dbReference type="FunFam" id="3.40.50.720:FF:000074">
    <property type="entry name" value="Retinol dehydrogenase type 1"/>
    <property type="match status" value="1"/>
</dbReference>
<dbReference type="Gene3D" id="3.40.50.720">
    <property type="entry name" value="NAD(P)-binding Rossmann-like Domain"/>
    <property type="match status" value="1"/>
</dbReference>
<dbReference type="InterPro" id="IPR036291">
    <property type="entry name" value="NAD(P)-bd_dom_sf"/>
</dbReference>
<dbReference type="InterPro" id="IPR020904">
    <property type="entry name" value="Sc_DH/Rdtase_CS"/>
</dbReference>
<dbReference type="InterPro" id="IPR002347">
    <property type="entry name" value="SDR_fam"/>
</dbReference>
<dbReference type="PANTHER" id="PTHR43313">
    <property type="entry name" value="SHORT-CHAIN DEHYDROGENASE/REDUCTASE FAMILY 9C"/>
    <property type="match status" value="1"/>
</dbReference>
<dbReference type="PANTHER" id="PTHR43313:SF5">
    <property type="entry name" value="SHORT-CHAIN DEHYDROGENASE_REDUCTASE FAMILY 9C MEMBER 7"/>
    <property type="match status" value="1"/>
</dbReference>
<dbReference type="Pfam" id="PF00106">
    <property type="entry name" value="adh_short"/>
    <property type="match status" value="1"/>
</dbReference>
<dbReference type="PRINTS" id="PR00081">
    <property type="entry name" value="GDHRDH"/>
</dbReference>
<dbReference type="PRINTS" id="PR00080">
    <property type="entry name" value="SDRFAMILY"/>
</dbReference>
<dbReference type="SUPFAM" id="SSF51735">
    <property type="entry name" value="NAD(P)-binding Rossmann-fold domains"/>
    <property type="match status" value="1"/>
</dbReference>
<dbReference type="PROSITE" id="PS00061">
    <property type="entry name" value="ADH_SHORT"/>
    <property type="match status" value="1"/>
</dbReference>
<gene>
    <name type="primary">SDR9C7</name>
    <name type="synonym">RDHS</name>
    <name type="synonym">SDRO</name>
</gene>
<feature type="chain" id="PRO_0000316884" description="Short-chain dehydrogenase/reductase family 9C member 7">
    <location>
        <begin position="1"/>
        <end position="313"/>
    </location>
</feature>
<feature type="active site" description="Proton acceptor" evidence="3">
    <location>
        <position position="172"/>
    </location>
</feature>
<feature type="binding site" evidence="1">
    <location>
        <begin position="29"/>
        <end position="53"/>
    </location>
    <ligand>
        <name>NADP(+)</name>
        <dbReference type="ChEBI" id="CHEBI:58349"/>
    </ligand>
</feature>
<feature type="binding site" evidence="1">
    <location>
        <position position="160"/>
    </location>
    <ligand>
        <name>substrate</name>
    </ligand>
</feature>
<feature type="modified residue" description="Phosphoserine" evidence="2">
    <location>
        <position position="185"/>
    </location>
</feature>
<keyword id="KW-0963">Cytoplasm</keyword>
<keyword id="KW-0521">NADP</keyword>
<keyword id="KW-0560">Oxidoreductase</keyword>
<keyword id="KW-0597">Phosphoprotein</keyword>
<keyword id="KW-1185">Reference proteome</keyword>
<reference key="1">
    <citation type="submission" date="2007-03" db="EMBL/GenBank/DDBJ databases">
        <authorList>
            <consortium name="NIH - Mammalian Gene Collection (MGC) project"/>
        </authorList>
    </citation>
    <scope>NUCLEOTIDE SEQUENCE [LARGE SCALE MRNA]</scope>
    <source>
        <strain>Hereford</strain>
        <tissue>Fetal skin</tissue>
    </source>
</reference>
<protein>
    <recommendedName>
        <fullName>Short-chain dehydrogenase/reductase family 9C member 7</fullName>
        <shortName>SDR9C7</shortName>
        <ecNumber>1.1.1.-</ecNumber>
    </recommendedName>
    <alternativeName>
        <fullName>O-acylceramide dehydrogenase</fullName>
    </alternativeName>
    <alternativeName>
        <fullName>Orphan short-chain dehydrogenase/reductase</fullName>
        <shortName>SDR-O</shortName>
    </alternativeName>
</protein>
<organism>
    <name type="scientific">Bos taurus</name>
    <name type="common">Bovine</name>
    <dbReference type="NCBI Taxonomy" id="9913"/>
    <lineage>
        <taxon>Eukaryota</taxon>
        <taxon>Metazoa</taxon>
        <taxon>Chordata</taxon>
        <taxon>Craniata</taxon>
        <taxon>Vertebrata</taxon>
        <taxon>Euteleostomi</taxon>
        <taxon>Mammalia</taxon>
        <taxon>Eutheria</taxon>
        <taxon>Laurasiatheria</taxon>
        <taxon>Artiodactyla</taxon>
        <taxon>Ruminantia</taxon>
        <taxon>Pecora</taxon>
        <taxon>Bovidae</taxon>
        <taxon>Bovinae</taxon>
        <taxon>Bos</taxon>
    </lineage>
</organism>
<comment type="function">
    <text evidence="2">Plays a crucial role in the formation of the epidermal permeability barrier. Catalyzes the NAD+-dependent dehydrogenation of the linoleate 9,10-trans-epoxy-11E-13-alcohol esterified in omega-O-acylceramides (such as in N-[omega-(9R,10R)-epoxy-(13R)-hydroxy-(11E)-octadecenoyloxy]-acylsphing-4E-enine) to the corresponding 13-ketone, the reactive moiety required for binding of epidermal ceramides to proteins. Displays weak conversion of all-trans-retinal to all-trans-retinol in the presence of NADH. Has apparently no steroid dehydrogenase activity.</text>
</comment>
<comment type="catalytic activity">
    <reaction evidence="2">
        <text>a N-[omega-(9R,10R)-epoxy-(13R)-hydroxy-(11E)-octadecenoyloxy]acyl-beta-D-glucosyl-(1&lt;-&gt;1)-sphing-4E-enine + NAD(+) = a N-[omega-(9R,10R)-epoxy-13-oxo-(11E)-octadecenoyloxy]acyl-beta-D-glucosyl-(1&lt;-&gt;1)-sphing-4E-enine + NADH + H(+)</text>
        <dbReference type="Rhea" id="RHEA:82447"/>
        <dbReference type="ChEBI" id="CHEBI:15378"/>
        <dbReference type="ChEBI" id="CHEBI:57540"/>
        <dbReference type="ChEBI" id="CHEBI:57945"/>
        <dbReference type="ChEBI" id="CHEBI:134626"/>
        <dbReference type="ChEBI" id="CHEBI:232325"/>
    </reaction>
    <physiologicalReaction direction="left-to-right" evidence="2">
        <dbReference type="Rhea" id="RHEA:82448"/>
    </physiologicalReaction>
</comment>
<comment type="catalytic activity">
    <reaction evidence="2">
        <text>a N-[omega-(9R,10R)-epoxy-(13R)-hydroxy-(11E)-octadecenoyloxy]-acylsphing-4E-enine + NAD(+) = a N-[omega-(9R,10R)-epoxy-13-oxo-(11E)-octadecenoyloxy]-acylsphing-4E-enine + NADH + H(+)</text>
        <dbReference type="Rhea" id="RHEA:82471"/>
        <dbReference type="ChEBI" id="CHEBI:15378"/>
        <dbReference type="ChEBI" id="CHEBI:57540"/>
        <dbReference type="ChEBI" id="CHEBI:57945"/>
        <dbReference type="ChEBI" id="CHEBI:77891"/>
        <dbReference type="ChEBI" id="CHEBI:77892"/>
    </reaction>
    <physiologicalReaction direction="left-to-right" evidence="2">
        <dbReference type="Rhea" id="RHEA:82472"/>
    </physiologicalReaction>
</comment>
<comment type="subcellular location">
    <subcellularLocation>
        <location evidence="1">Cytoplasm</location>
    </subcellularLocation>
</comment>
<comment type="similarity">
    <text evidence="4">Belongs to the short-chain dehydrogenases/reductases (SDR) family.</text>
</comment>